<accession>B1LJM9</accession>
<name>RECR_ECOSM</name>
<protein>
    <recommendedName>
        <fullName evidence="1">Recombination protein RecR</fullName>
    </recommendedName>
</protein>
<proteinExistence type="inferred from homology"/>
<gene>
    <name evidence="1" type="primary">recR</name>
    <name type="ordered locus">EcSMS35_0515</name>
</gene>
<sequence length="201" mass="21963">MQTSPLLTQLMEALRCLPGVGPKSAQRMAFTLLQRDRSGGMRLAQALTRAMSEIGHCADCRTFTEQEVCNICSNPRRQENGQICVVESPADIYAIEQTGQFSGRYFVLMGHLSPLDGIGPDDIGLDRLEQRLAEEKITEVILATNPTVEGEATANYIAELCAQYDVEASRIAHGVPVGGELEMVDGTTLSHSLAGRHKIRF</sequence>
<reference key="1">
    <citation type="journal article" date="2008" name="J. Bacteriol.">
        <title>Insights into the environmental resistance gene pool from the genome sequence of the multidrug-resistant environmental isolate Escherichia coli SMS-3-5.</title>
        <authorList>
            <person name="Fricke W.F."/>
            <person name="Wright M.S."/>
            <person name="Lindell A.H."/>
            <person name="Harkins D.M."/>
            <person name="Baker-Austin C."/>
            <person name="Ravel J."/>
            <person name="Stepanauskas R."/>
        </authorList>
    </citation>
    <scope>NUCLEOTIDE SEQUENCE [LARGE SCALE GENOMIC DNA]</scope>
    <source>
        <strain>SMS-3-5 / SECEC</strain>
    </source>
</reference>
<comment type="function">
    <text evidence="1">May play a role in DNA repair. It seems to be involved in an RecBC-independent recombinational process of DNA repair. It may act with RecF and RecO.</text>
</comment>
<comment type="similarity">
    <text evidence="1">Belongs to the RecR family.</text>
</comment>
<keyword id="KW-0227">DNA damage</keyword>
<keyword id="KW-0233">DNA recombination</keyword>
<keyword id="KW-0234">DNA repair</keyword>
<keyword id="KW-0479">Metal-binding</keyword>
<keyword id="KW-0862">Zinc</keyword>
<keyword id="KW-0863">Zinc-finger</keyword>
<dbReference type="EMBL" id="CP000970">
    <property type="protein sequence ID" value="ACB18885.1"/>
    <property type="molecule type" value="Genomic_DNA"/>
</dbReference>
<dbReference type="RefSeq" id="WP_001195025.1">
    <property type="nucleotide sequence ID" value="NC_010498.1"/>
</dbReference>
<dbReference type="SMR" id="B1LJM9"/>
<dbReference type="GeneID" id="93776978"/>
<dbReference type="KEGG" id="ecm:EcSMS35_0515"/>
<dbReference type="HOGENOM" id="CLU_060739_1_2_6"/>
<dbReference type="Proteomes" id="UP000007011">
    <property type="component" value="Chromosome"/>
</dbReference>
<dbReference type="GO" id="GO:0003677">
    <property type="term" value="F:DNA binding"/>
    <property type="evidence" value="ECO:0007669"/>
    <property type="project" value="UniProtKB-UniRule"/>
</dbReference>
<dbReference type="GO" id="GO:0008270">
    <property type="term" value="F:zinc ion binding"/>
    <property type="evidence" value="ECO:0007669"/>
    <property type="project" value="UniProtKB-KW"/>
</dbReference>
<dbReference type="GO" id="GO:0006310">
    <property type="term" value="P:DNA recombination"/>
    <property type="evidence" value="ECO:0007669"/>
    <property type="project" value="UniProtKB-UniRule"/>
</dbReference>
<dbReference type="GO" id="GO:0006281">
    <property type="term" value="P:DNA repair"/>
    <property type="evidence" value="ECO:0007669"/>
    <property type="project" value="UniProtKB-UniRule"/>
</dbReference>
<dbReference type="CDD" id="cd01025">
    <property type="entry name" value="TOPRIM_recR"/>
    <property type="match status" value="1"/>
</dbReference>
<dbReference type="FunFam" id="1.10.8.420:FF:000001">
    <property type="entry name" value="Recombination protein RecR"/>
    <property type="match status" value="1"/>
</dbReference>
<dbReference type="FunFam" id="3.40.1360.10:FF:000001">
    <property type="entry name" value="Recombination protein RecR"/>
    <property type="match status" value="1"/>
</dbReference>
<dbReference type="Gene3D" id="3.40.1360.10">
    <property type="match status" value="1"/>
</dbReference>
<dbReference type="Gene3D" id="6.10.250.240">
    <property type="match status" value="1"/>
</dbReference>
<dbReference type="Gene3D" id="1.10.8.420">
    <property type="entry name" value="RecR Domain 1"/>
    <property type="match status" value="1"/>
</dbReference>
<dbReference type="HAMAP" id="MF_00017">
    <property type="entry name" value="RecR"/>
    <property type="match status" value="1"/>
</dbReference>
<dbReference type="InterPro" id="IPR000093">
    <property type="entry name" value="DNA_Rcmb_RecR"/>
</dbReference>
<dbReference type="InterPro" id="IPR023627">
    <property type="entry name" value="Rcmb_RecR"/>
</dbReference>
<dbReference type="InterPro" id="IPR015967">
    <property type="entry name" value="Rcmb_RecR_Znf"/>
</dbReference>
<dbReference type="InterPro" id="IPR006171">
    <property type="entry name" value="TOPRIM_dom"/>
</dbReference>
<dbReference type="InterPro" id="IPR034137">
    <property type="entry name" value="TOPRIM_RecR"/>
</dbReference>
<dbReference type="NCBIfam" id="TIGR00615">
    <property type="entry name" value="recR"/>
    <property type="match status" value="1"/>
</dbReference>
<dbReference type="PANTHER" id="PTHR30446">
    <property type="entry name" value="RECOMBINATION PROTEIN RECR"/>
    <property type="match status" value="1"/>
</dbReference>
<dbReference type="PANTHER" id="PTHR30446:SF0">
    <property type="entry name" value="RECOMBINATION PROTEIN RECR"/>
    <property type="match status" value="1"/>
</dbReference>
<dbReference type="Pfam" id="PF21175">
    <property type="entry name" value="RecR_C"/>
    <property type="match status" value="1"/>
</dbReference>
<dbReference type="Pfam" id="PF21176">
    <property type="entry name" value="RecR_HhH"/>
    <property type="match status" value="1"/>
</dbReference>
<dbReference type="Pfam" id="PF02132">
    <property type="entry name" value="RecR_ZnF"/>
    <property type="match status" value="1"/>
</dbReference>
<dbReference type="Pfam" id="PF13662">
    <property type="entry name" value="Toprim_4"/>
    <property type="match status" value="1"/>
</dbReference>
<dbReference type="SMART" id="SM00493">
    <property type="entry name" value="TOPRIM"/>
    <property type="match status" value="1"/>
</dbReference>
<dbReference type="SUPFAM" id="SSF111304">
    <property type="entry name" value="Recombination protein RecR"/>
    <property type="match status" value="1"/>
</dbReference>
<dbReference type="PROSITE" id="PS01300">
    <property type="entry name" value="RECR"/>
    <property type="match status" value="1"/>
</dbReference>
<dbReference type="PROSITE" id="PS50880">
    <property type="entry name" value="TOPRIM"/>
    <property type="match status" value="1"/>
</dbReference>
<feature type="chain" id="PRO_1000195383" description="Recombination protein RecR">
    <location>
        <begin position="1"/>
        <end position="201"/>
    </location>
</feature>
<feature type="domain" description="Toprim" evidence="1">
    <location>
        <begin position="81"/>
        <end position="176"/>
    </location>
</feature>
<feature type="zinc finger region" description="C4-type" evidence="1">
    <location>
        <begin position="57"/>
        <end position="72"/>
    </location>
</feature>
<organism>
    <name type="scientific">Escherichia coli (strain SMS-3-5 / SECEC)</name>
    <dbReference type="NCBI Taxonomy" id="439855"/>
    <lineage>
        <taxon>Bacteria</taxon>
        <taxon>Pseudomonadati</taxon>
        <taxon>Pseudomonadota</taxon>
        <taxon>Gammaproteobacteria</taxon>
        <taxon>Enterobacterales</taxon>
        <taxon>Enterobacteriaceae</taxon>
        <taxon>Escherichia</taxon>
    </lineage>
</organism>
<evidence type="ECO:0000255" key="1">
    <source>
        <dbReference type="HAMAP-Rule" id="MF_00017"/>
    </source>
</evidence>